<comment type="function">
    <text evidence="1">Catalyzes amidations at positions B, D, E, and G on adenosylcobyrinic A,C-diamide. NH(2) groups are provided by glutamine, and one molecule of ATP is hydrogenolyzed for each amidation.</text>
</comment>
<comment type="pathway">
    <text evidence="1">Cofactor biosynthesis; adenosylcobalamin biosynthesis.</text>
</comment>
<comment type="similarity">
    <text evidence="1">Belongs to the CobB/CobQ family. CobQ subfamily.</text>
</comment>
<proteinExistence type="inferred from homology"/>
<reference key="1">
    <citation type="journal article" date="2002" name="Proc. Natl. Acad. Sci. U.S.A.">
        <title>The Brucella suis genome reveals fundamental similarities between animal and plant pathogens and symbionts.</title>
        <authorList>
            <person name="Paulsen I.T."/>
            <person name="Seshadri R."/>
            <person name="Nelson K.E."/>
            <person name="Eisen J.A."/>
            <person name="Heidelberg J.F."/>
            <person name="Read T.D."/>
            <person name="Dodson R.J."/>
            <person name="Umayam L.A."/>
            <person name="Brinkac L.M."/>
            <person name="Beanan M.J."/>
            <person name="Daugherty S.C."/>
            <person name="DeBoy R.T."/>
            <person name="Durkin A.S."/>
            <person name="Kolonay J.F."/>
            <person name="Madupu R."/>
            <person name="Nelson W.C."/>
            <person name="Ayodeji B."/>
            <person name="Kraul M."/>
            <person name="Shetty J."/>
            <person name="Malek J.A."/>
            <person name="Van Aken S.E."/>
            <person name="Riedmuller S."/>
            <person name="Tettelin H."/>
            <person name="Gill S.R."/>
            <person name="White O."/>
            <person name="Salzberg S.L."/>
            <person name="Hoover D.L."/>
            <person name="Lindler L.E."/>
            <person name="Halling S.M."/>
            <person name="Boyle S.M."/>
            <person name="Fraser C.M."/>
        </authorList>
    </citation>
    <scope>NUCLEOTIDE SEQUENCE [LARGE SCALE GENOMIC DNA]</scope>
    <source>
        <strain>1330</strain>
    </source>
</reference>
<reference key="2">
    <citation type="journal article" date="2011" name="J. Bacteriol.">
        <title>Revised genome sequence of Brucella suis 1330.</title>
        <authorList>
            <person name="Tae H."/>
            <person name="Shallom S."/>
            <person name="Settlage R."/>
            <person name="Preston D."/>
            <person name="Adams L.G."/>
            <person name="Garner H.R."/>
        </authorList>
    </citation>
    <scope>NUCLEOTIDE SEQUENCE [LARGE SCALE GENOMIC DNA]</scope>
    <source>
        <strain>1330</strain>
    </source>
</reference>
<evidence type="ECO:0000255" key="1">
    <source>
        <dbReference type="HAMAP-Rule" id="MF_00028"/>
    </source>
</evidence>
<dbReference type="EMBL" id="AE014291">
    <property type="protein sequence ID" value="AAN30229.1"/>
    <property type="molecule type" value="Genomic_DNA"/>
</dbReference>
<dbReference type="EMBL" id="CP002997">
    <property type="protein sequence ID" value="AEM18647.1"/>
    <property type="molecule type" value="Genomic_DNA"/>
</dbReference>
<dbReference type="RefSeq" id="WP_004688499.1">
    <property type="nucleotide sequence ID" value="NZ_KN046804.1"/>
</dbReference>
<dbReference type="SMR" id="Q8G005"/>
<dbReference type="KEGG" id="bms:BR1311"/>
<dbReference type="KEGG" id="bsi:BS1330_I1307"/>
<dbReference type="PATRIC" id="fig|204722.22.peg.273"/>
<dbReference type="HOGENOM" id="CLU_019250_2_0_5"/>
<dbReference type="PhylomeDB" id="Q8G005"/>
<dbReference type="UniPathway" id="UPA00148"/>
<dbReference type="Proteomes" id="UP000007104">
    <property type="component" value="Chromosome I"/>
</dbReference>
<dbReference type="GO" id="GO:0015420">
    <property type="term" value="F:ABC-type vitamin B12 transporter activity"/>
    <property type="evidence" value="ECO:0007669"/>
    <property type="project" value="UniProtKB-UniRule"/>
</dbReference>
<dbReference type="GO" id="GO:0003824">
    <property type="term" value="F:catalytic activity"/>
    <property type="evidence" value="ECO:0007669"/>
    <property type="project" value="InterPro"/>
</dbReference>
<dbReference type="GO" id="GO:0009236">
    <property type="term" value="P:cobalamin biosynthetic process"/>
    <property type="evidence" value="ECO:0007669"/>
    <property type="project" value="UniProtKB-UniRule"/>
</dbReference>
<dbReference type="CDD" id="cd05389">
    <property type="entry name" value="CobQ_N"/>
    <property type="match status" value="1"/>
</dbReference>
<dbReference type="CDD" id="cd01750">
    <property type="entry name" value="GATase1_CobQ"/>
    <property type="match status" value="1"/>
</dbReference>
<dbReference type="Gene3D" id="3.40.50.880">
    <property type="match status" value="1"/>
</dbReference>
<dbReference type="Gene3D" id="3.40.50.300">
    <property type="entry name" value="P-loop containing nucleotide triphosphate hydrolases"/>
    <property type="match status" value="1"/>
</dbReference>
<dbReference type="HAMAP" id="MF_00028">
    <property type="entry name" value="CobQ"/>
    <property type="match status" value="1"/>
</dbReference>
<dbReference type="InterPro" id="IPR029062">
    <property type="entry name" value="Class_I_gatase-like"/>
</dbReference>
<dbReference type="InterPro" id="IPR002586">
    <property type="entry name" value="CobQ/CobB/MinD/ParA_Nub-bd_dom"/>
</dbReference>
<dbReference type="InterPro" id="IPR033949">
    <property type="entry name" value="CobQ_GATase1"/>
</dbReference>
<dbReference type="InterPro" id="IPR047045">
    <property type="entry name" value="CobQ_N"/>
</dbReference>
<dbReference type="InterPro" id="IPR004459">
    <property type="entry name" value="CobQ_synth"/>
</dbReference>
<dbReference type="InterPro" id="IPR011698">
    <property type="entry name" value="GATase_3"/>
</dbReference>
<dbReference type="InterPro" id="IPR027417">
    <property type="entry name" value="P-loop_NTPase"/>
</dbReference>
<dbReference type="NCBIfam" id="TIGR00313">
    <property type="entry name" value="cobQ"/>
    <property type="match status" value="1"/>
</dbReference>
<dbReference type="NCBIfam" id="NF001989">
    <property type="entry name" value="PRK00784.1"/>
    <property type="match status" value="1"/>
</dbReference>
<dbReference type="PANTHER" id="PTHR21343:SF1">
    <property type="entry name" value="COBYRIC ACID SYNTHASE"/>
    <property type="match status" value="1"/>
</dbReference>
<dbReference type="PANTHER" id="PTHR21343">
    <property type="entry name" value="DETHIOBIOTIN SYNTHETASE"/>
    <property type="match status" value="1"/>
</dbReference>
<dbReference type="Pfam" id="PF01656">
    <property type="entry name" value="CbiA"/>
    <property type="match status" value="1"/>
</dbReference>
<dbReference type="Pfam" id="PF07685">
    <property type="entry name" value="GATase_3"/>
    <property type="match status" value="1"/>
</dbReference>
<dbReference type="SUPFAM" id="SSF52317">
    <property type="entry name" value="Class I glutamine amidotransferase-like"/>
    <property type="match status" value="1"/>
</dbReference>
<dbReference type="SUPFAM" id="SSF52540">
    <property type="entry name" value="P-loop containing nucleoside triphosphate hydrolases"/>
    <property type="match status" value="1"/>
</dbReference>
<dbReference type="PROSITE" id="PS51274">
    <property type="entry name" value="GATASE_COBBQ"/>
    <property type="match status" value="1"/>
</dbReference>
<gene>
    <name evidence="1" type="primary">cobQ</name>
    <name type="ordered locus">BR1311</name>
    <name type="ordered locus">BS1330_I1307</name>
</gene>
<protein>
    <recommendedName>
        <fullName evidence="1">Cobyric acid synthase</fullName>
    </recommendedName>
</protein>
<feature type="chain" id="PRO_0000141291" description="Cobyric acid synthase">
    <location>
        <begin position="1"/>
        <end position="483"/>
    </location>
</feature>
<feature type="domain" description="GATase cobBQ-type" evidence="1">
    <location>
        <begin position="251"/>
        <end position="438"/>
    </location>
</feature>
<feature type="active site" description="Nucleophile" evidence="1">
    <location>
        <position position="333"/>
    </location>
</feature>
<feature type="active site" evidence="1">
    <location>
        <position position="430"/>
    </location>
</feature>
<keyword id="KW-0169">Cobalamin biosynthesis</keyword>
<keyword id="KW-0315">Glutamine amidotransferase</keyword>
<accession>Q8G005</accession>
<accession>G0KAS0</accession>
<name>COBQ_BRUSU</name>
<sequence>MARAIMFQGTGSDVGKSVLVAGLCRVARNRGLKVRPFKPQNMSNNAAVSDDGGEIGRAQWLQALACGVPSSVHMNPVLLKPQTDMGSQLIVQGQVRGEARGRYYQELKPQLMAAVMESFAKVGDGADLVLVEGAGSPAEINLRAGDIANMGFATHADVPVVLVGDIDRGGVIASLVGTHTILPQEDRAMVRGFLINKFRGDISLFDDGLAAITRFTGWRSFGVVPWLKAVSRLPAEDSVVLERAVRGDKKALIVAVPMLPRIANFDDLDPLKAEPAVEVVMVPPGSSLPADAGLVVLPGTKSTIADLLALRENGWDRELVAHVKRGGHVLGICGGFQMLGRRISDPAGIEGNVRDIEGLGLLDIETMMEPEKVVRNVEAVSLLHDEPLEGYEIHIGRTSGPDMARPFARIGDHDDGAVSPDGRIMGTYLHGVFSADRFRHHFLRALGVEGGQMNYRESVEEALDELAEGLEASLDIDGLFALA</sequence>
<organism>
    <name type="scientific">Brucella suis biovar 1 (strain 1330)</name>
    <dbReference type="NCBI Taxonomy" id="204722"/>
    <lineage>
        <taxon>Bacteria</taxon>
        <taxon>Pseudomonadati</taxon>
        <taxon>Pseudomonadota</taxon>
        <taxon>Alphaproteobacteria</taxon>
        <taxon>Hyphomicrobiales</taxon>
        <taxon>Brucellaceae</taxon>
        <taxon>Brucella/Ochrobactrum group</taxon>
        <taxon>Brucella</taxon>
    </lineage>
</organism>